<keyword id="KW-0030">Aminoacyl-tRNA synthetase</keyword>
<keyword id="KW-0067">ATP-binding</keyword>
<keyword id="KW-0963">Cytoplasm</keyword>
<keyword id="KW-0436">Ligase</keyword>
<keyword id="KW-0460">Magnesium</keyword>
<keyword id="KW-0479">Metal-binding</keyword>
<keyword id="KW-0547">Nucleotide-binding</keyword>
<keyword id="KW-0648">Protein biosynthesis</keyword>
<sequence>MTEIIQELDLNGEMLVRREKLAALRAKGNAFPNTFRRNALAQDLHTQYDEIESESLKTQGIEVKVAGRIMTRRVMGKATFITLQDMSGKIQLYVARDNLAEGVYTDDVGNWDLGDIVGVKGTLFKTKTNELTIRATEVHLLTKALRPLPNKFHGLSDQETRYRQRYLDLIANEDSRRTFIIRSKVIAGIREYFISKGFMEVETPMLQIIPGGASARPFITHHNALDVDMYLRIAPELYLKRLVVGGFERVFELNRNFRNEGVSIRHNPEFTMLEYYQAYADYHDLMDNTEELLRKLALDILGTTIVPYGDLKFDFGKPFERITMHEAILKYGAEQGIVKEDLYDFDRAVAVAQKLGIEVQKSWGLGSLVNAIFEEVAEHHLIQPTFLMAHPAEISPLARRNDENPDVTDRFELFIGGREIGNGFSELNDAEDQNERFDAQVAAKEAGDDEAMFKDEDFVTALEHGLPPTAGEGLGIDRLAMLFANANSIRDVILFPAMKTKS</sequence>
<dbReference type="EC" id="6.1.1.6" evidence="1"/>
<dbReference type="EMBL" id="CP000947">
    <property type="protein sequence ID" value="ACA32174.1"/>
    <property type="molecule type" value="Genomic_DNA"/>
</dbReference>
<dbReference type="RefSeq" id="WP_012341358.1">
    <property type="nucleotide sequence ID" value="NC_010519.1"/>
</dbReference>
<dbReference type="SMR" id="B0URW9"/>
<dbReference type="STRING" id="228400.HSM_0524"/>
<dbReference type="GeneID" id="31486803"/>
<dbReference type="KEGG" id="hsm:HSM_0524"/>
<dbReference type="HOGENOM" id="CLU_008255_6_0_6"/>
<dbReference type="GO" id="GO:0005829">
    <property type="term" value="C:cytosol"/>
    <property type="evidence" value="ECO:0007669"/>
    <property type="project" value="TreeGrafter"/>
</dbReference>
<dbReference type="GO" id="GO:0005524">
    <property type="term" value="F:ATP binding"/>
    <property type="evidence" value="ECO:0007669"/>
    <property type="project" value="UniProtKB-UniRule"/>
</dbReference>
<dbReference type="GO" id="GO:0004824">
    <property type="term" value="F:lysine-tRNA ligase activity"/>
    <property type="evidence" value="ECO:0007669"/>
    <property type="project" value="UniProtKB-UniRule"/>
</dbReference>
<dbReference type="GO" id="GO:0000287">
    <property type="term" value="F:magnesium ion binding"/>
    <property type="evidence" value="ECO:0007669"/>
    <property type="project" value="UniProtKB-UniRule"/>
</dbReference>
<dbReference type="GO" id="GO:0000049">
    <property type="term" value="F:tRNA binding"/>
    <property type="evidence" value="ECO:0007669"/>
    <property type="project" value="TreeGrafter"/>
</dbReference>
<dbReference type="GO" id="GO:0006430">
    <property type="term" value="P:lysyl-tRNA aminoacylation"/>
    <property type="evidence" value="ECO:0007669"/>
    <property type="project" value="UniProtKB-UniRule"/>
</dbReference>
<dbReference type="CDD" id="cd00775">
    <property type="entry name" value="LysRS_core"/>
    <property type="match status" value="1"/>
</dbReference>
<dbReference type="CDD" id="cd04322">
    <property type="entry name" value="LysRS_N"/>
    <property type="match status" value="1"/>
</dbReference>
<dbReference type="FunFam" id="2.40.50.140:FF:000024">
    <property type="entry name" value="Lysine--tRNA ligase"/>
    <property type="match status" value="1"/>
</dbReference>
<dbReference type="FunFam" id="3.30.930.10:FF:000001">
    <property type="entry name" value="Lysine--tRNA ligase"/>
    <property type="match status" value="1"/>
</dbReference>
<dbReference type="Gene3D" id="3.30.930.10">
    <property type="entry name" value="Bira Bifunctional Protein, Domain 2"/>
    <property type="match status" value="1"/>
</dbReference>
<dbReference type="Gene3D" id="2.40.50.140">
    <property type="entry name" value="Nucleic acid-binding proteins"/>
    <property type="match status" value="1"/>
</dbReference>
<dbReference type="HAMAP" id="MF_00252">
    <property type="entry name" value="Lys_tRNA_synth_class2"/>
    <property type="match status" value="1"/>
</dbReference>
<dbReference type="InterPro" id="IPR004364">
    <property type="entry name" value="Aa-tRNA-synt_II"/>
</dbReference>
<dbReference type="InterPro" id="IPR006195">
    <property type="entry name" value="aa-tRNA-synth_II"/>
</dbReference>
<dbReference type="InterPro" id="IPR045864">
    <property type="entry name" value="aa-tRNA-synth_II/BPL/LPL"/>
</dbReference>
<dbReference type="InterPro" id="IPR002313">
    <property type="entry name" value="Lys-tRNA-ligase_II"/>
</dbReference>
<dbReference type="InterPro" id="IPR034762">
    <property type="entry name" value="Lys-tRNA-ligase_II_bac/euk"/>
</dbReference>
<dbReference type="InterPro" id="IPR044136">
    <property type="entry name" value="Lys-tRNA-ligase_II_N"/>
</dbReference>
<dbReference type="InterPro" id="IPR018149">
    <property type="entry name" value="Lys-tRNA-synth_II_C"/>
</dbReference>
<dbReference type="InterPro" id="IPR012340">
    <property type="entry name" value="NA-bd_OB-fold"/>
</dbReference>
<dbReference type="InterPro" id="IPR004365">
    <property type="entry name" value="NA-bd_OB_tRNA"/>
</dbReference>
<dbReference type="NCBIfam" id="TIGR00499">
    <property type="entry name" value="lysS_bact"/>
    <property type="match status" value="1"/>
</dbReference>
<dbReference type="NCBIfam" id="NF001756">
    <property type="entry name" value="PRK00484.1"/>
    <property type="match status" value="1"/>
</dbReference>
<dbReference type="PANTHER" id="PTHR42918:SF15">
    <property type="entry name" value="LYSINE--TRNA LIGASE, CHLOROPLASTIC_MITOCHONDRIAL"/>
    <property type="match status" value="1"/>
</dbReference>
<dbReference type="PANTHER" id="PTHR42918">
    <property type="entry name" value="LYSYL-TRNA SYNTHETASE"/>
    <property type="match status" value="1"/>
</dbReference>
<dbReference type="Pfam" id="PF00152">
    <property type="entry name" value="tRNA-synt_2"/>
    <property type="match status" value="1"/>
</dbReference>
<dbReference type="Pfam" id="PF01336">
    <property type="entry name" value="tRNA_anti-codon"/>
    <property type="match status" value="1"/>
</dbReference>
<dbReference type="PIRSF" id="PIRSF039101">
    <property type="entry name" value="LysRS2"/>
    <property type="match status" value="1"/>
</dbReference>
<dbReference type="PRINTS" id="PR00982">
    <property type="entry name" value="TRNASYNTHLYS"/>
</dbReference>
<dbReference type="SUPFAM" id="SSF55681">
    <property type="entry name" value="Class II aaRS and biotin synthetases"/>
    <property type="match status" value="1"/>
</dbReference>
<dbReference type="SUPFAM" id="SSF50249">
    <property type="entry name" value="Nucleic acid-binding proteins"/>
    <property type="match status" value="1"/>
</dbReference>
<dbReference type="PROSITE" id="PS50862">
    <property type="entry name" value="AA_TRNA_LIGASE_II"/>
    <property type="match status" value="1"/>
</dbReference>
<comment type="catalytic activity">
    <reaction evidence="1">
        <text>tRNA(Lys) + L-lysine + ATP = L-lysyl-tRNA(Lys) + AMP + diphosphate</text>
        <dbReference type="Rhea" id="RHEA:20792"/>
        <dbReference type="Rhea" id="RHEA-COMP:9696"/>
        <dbReference type="Rhea" id="RHEA-COMP:9697"/>
        <dbReference type="ChEBI" id="CHEBI:30616"/>
        <dbReference type="ChEBI" id="CHEBI:32551"/>
        <dbReference type="ChEBI" id="CHEBI:33019"/>
        <dbReference type="ChEBI" id="CHEBI:78442"/>
        <dbReference type="ChEBI" id="CHEBI:78529"/>
        <dbReference type="ChEBI" id="CHEBI:456215"/>
        <dbReference type="EC" id="6.1.1.6"/>
    </reaction>
</comment>
<comment type="cofactor">
    <cofactor evidence="1">
        <name>Mg(2+)</name>
        <dbReference type="ChEBI" id="CHEBI:18420"/>
    </cofactor>
    <text evidence="1">Binds 3 Mg(2+) ions per subunit.</text>
</comment>
<comment type="subunit">
    <text evidence="1">Homodimer.</text>
</comment>
<comment type="subcellular location">
    <subcellularLocation>
        <location evidence="1">Cytoplasm</location>
    </subcellularLocation>
</comment>
<comment type="similarity">
    <text evidence="1">Belongs to the class-II aminoacyl-tRNA synthetase family.</text>
</comment>
<accession>B0URW9</accession>
<name>SYK_HISS2</name>
<proteinExistence type="inferred from homology"/>
<reference key="1">
    <citation type="submission" date="2008-02" db="EMBL/GenBank/DDBJ databases">
        <title>Complete sequence of Haemophilus somnus 2336.</title>
        <authorList>
            <consortium name="US DOE Joint Genome Institute"/>
            <person name="Siddaramappa S."/>
            <person name="Duncan A.J."/>
            <person name="Challacombe J.F."/>
            <person name="Rainey D."/>
            <person name="Gillaspy A.F."/>
            <person name="Carson M."/>
            <person name="Gipson J."/>
            <person name="Gipson M."/>
            <person name="Bruce D."/>
            <person name="Detter J.C."/>
            <person name="Han C.S."/>
            <person name="Land M."/>
            <person name="Tapia R."/>
            <person name="Thompson L.S."/>
            <person name="Orvis J."/>
            <person name="Zaitshik J."/>
            <person name="Barnes G."/>
            <person name="Brettin T.S."/>
            <person name="Dyer D.W."/>
            <person name="Inzana T.J."/>
        </authorList>
    </citation>
    <scope>NUCLEOTIDE SEQUENCE [LARGE SCALE GENOMIC DNA]</scope>
    <source>
        <strain>2336</strain>
    </source>
</reference>
<feature type="chain" id="PRO_1000078501" description="Lysine--tRNA ligase">
    <location>
        <begin position="1"/>
        <end position="502"/>
    </location>
</feature>
<feature type="binding site" evidence="1">
    <location>
        <position position="412"/>
    </location>
    <ligand>
        <name>Mg(2+)</name>
        <dbReference type="ChEBI" id="CHEBI:18420"/>
        <label>1</label>
    </ligand>
</feature>
<feature type="binding site" evidence="1">
    <location>
        <position position="419"/>
    </location>
    <ligand>
        <name>Mg(2+)</name>
        <dbReference type="ChEBI" id="CHEBI:18420"/>
        <label>1</label>
    </ligand>
</feature>
<feature type="binding site" evidence="1">
    <location>
        <position position="419"/>
    </location>
    <ligand>
        <name>Mg(2+)</name>
        <dbReference type="ChEBI" id="CHEBI:18420"/>
        <label>2</label>
    </ligand>
</feature>
<gene>
    <name evidence="1" type="primary">lysS</name>
    <name type="ordered locus">HSM_0524</name>
</gene>
<protein>
    <recommendedName>
        <fullName evidence="1">Lysine--tRNA ligase</fullName>
        <ecNumber evidence="1">6.1.1.6</ecNumber>
    </recommendedName>
    <alternativeName>
        <fullName evidence="1">Lysyl-tRNA synthetase</fullName>
        <shortName evidence="1">LysRS</shortName>
    </alternativeName>
</protein>
<organism>
    <name type="scientific">Histophilus somni (strain 2336)</name>
    <name type="common">Haemophilus somnus</name>
    <dbReference type="NCBI Taxonomy" id="228400"/>
    <lineage>
        <taxon>Bacteria</taxon>
        <taxon>Pseudomonadati</taxon>
        <taxon>Pseudomonadota</taxon>
        <taxon>Gammaproteobacteria</taxon>
        <taxon>Pasteurellales</taxon>
        <taxon>Pasteurellaceae</taxon>
        <taxon>Histophilus</taxon>
    </lineage>
</organism>
<evidence type="ECO:0000255" key="1">
    <source>
        <dbReference type="HAMAP-Rule" id="MF_00252"/>
    </source>
</evidence>